<name>DUSB_VIBCH</name>
<sequence length="322" mass="35499">MKIGNYQLKNNLIVAPMAGVTDRPFRELCLRYGAGMAVSEMMSCNPALWKTAKSQNRMVHEGESGIRSVQIAGSDPQLMAEAAQFSVENGAQIIDINMGCPAKKVNKKLAGSALLRYPDVIEDILKAVVNAVNVPVTLKTRTGWDTDNKNCLSIAQLAEDCGIQALALHGRTRACMYKGEAEYDSIKAVKAAVSIPVIANGDIDSPEKARYVLEYTGADALMIGRPAQGRPWIFQEIQHFLEHGTTMPELPISEVKDIMLGHVTALHQFYGEYLGPRIARKHVSWYLQEHEQASAFRRTFNAIETADQQLDALEGYFDNVAS</sequence>
<evidence type="ECO:0000255" key="1">
    <source>
        <dbReference type="HAMAP-Rule" id="MF_02042"/>
    </source>
</evidence>
<evidence type="ECO:0000305" key="2"/>
<dbReference type="EC" id="1.3.1.-" evidence="1"/>
<dbReference type="EMBL" id="AE003852">
    <property type="protein sequence ID" value="AAF93465.1"/>
    <property type="status" value="ALT_INIT"/>
    <property type="molecule type" value="Genomic_DNA"/>
</dbReference>
<dbReference type="PIR" id="B82341">
    <property type="entry name" value="B82341"/>
</dbReference>
<dbReference type="RefSeq" id="NP_229946.1">
    <property type="nucleotide sequence ID" value="NC_002505.1"/>
</dbReference>
<dbReference type="RefSeq" id="WP_001905559.1">
    <property type="nucleotide sequence ID" value="NZ_LT906614.1"/>
</dbReference>
<dbReference type="SMR" id="Q9KV66"/>
<dbReference type="STRING" id="243277.VC_0291"/>
<dbReference type="DNASU" id="2615014"/>
<dbReference type="EnsemblBacteria" id="AAF93465">
    <property type="protein sequence ID" value="AAF93465"/>
    <property type="gene ID" value="VC_0291"/>
</dbReference>
<dbReference type="GeneID" id="69720983"/>
<dbReference type="KEGG" id="vch:VC_0291"/>
<dbReference type="PATRIC" id="fig|243277.26.peg.273"/>
<dbReference type="eggNOG" id="COG0042">
    <property type="taxonomic scope" value="Bacteria"/>
</dbReference>
<dbReference type="HOGENOM" id="CLU_013299_0_1_6"/>
<dbReference type="Proteomes" id="UP000000584">
    <property type="component" value="Chromosome 1"/>
</dbReference>
<dbReference type="GO" id="GO:0050660">
    <property type="term" value="F:flavin adenine dinucleotide binding"/>
    <property type="evidence" value="ECO:0007669"/>
    <property type="project" value="InterPro"/>
</dbReference>
<dbReference type="GO" id="GO:0010181">
    <property type="term" value="F:FMN binding"/>
    <property type="evidence" value="ECO:0007669"/>
    <property type="project" value="UniProtKB-UniRule"/>
</dbReference>
<dbReference type="GO" id="GO:0000049">
    <property type="term" value="F:tRNA binding"/>
    <property type="evidence" value="ECO:0007669"/>
    <property type="project" value="UniProtKB-UniRule"/>
</dbReference>
<dbReference type="GO" id="GO:0017150">
    <property type="term" value="F:tRNA dihydrouridine synthase activity"/>
    <property type="evidence" value="ECO:0007669"/>
    <property type="project" value="UniProtKB-UniRule"/>
</dbReference>
<dbReference type="CDD" id="cd02801">
    <property type="entry name" value="DUS_like_FMN"/>
    <property type="match status" value="1"/>
</dbReference>
<dbReference type="FunFam" id="3.20.20.70:FF:000051">
    <property type="entry name" value="tRNA-dihydrouridine synthase B"/>
    <property type="match status" value="1"/>
</dbReference>
<dbReference type="Gene3D" id="3.20.20.70">
    <property type="entry name" value="Aldolase class I"/>
    <property type="match status" value="1"/>
</dbReference>
<dbReference type="Gene3D" id="1.10.1200.80">
    <property type="entry name" value="Putative flavin oxidoreducatase, domain 2"/>
    <property type="match status" value="1"/>
</dbReference>
<dbReference type="HAMAP" id="MF_02042">
    <property type="entry name" value="DusB_subfam"/>
    <property type="match status" value="1"/>
</dbReference>
<dbReference type="InterPro" id="IPR013785">
    <property type="entry name" value="Aldolase_TIM"/>
</dbReference>
<dbReference type="InterPro" id="IPR035587">
    <property type="entry name" value="DUS-like_FMN-bd"/>
</dbReference>
<dbReference type="InterPro" id="IPR001269">
    <property type="entry name" value="DUS_fam"/>
</dbReference>
<dbReference type="InterPro" id="IPR032887">
    <property type="entry name" value="DusB"/>
</dbReference>
<dbReference type="InterPro" id="IPR004652">
    <property type="entry name" value="DusB-like"/>
</dbReference>
<dbReference type="InterPro" id="IPR024036">
    <property type="entry name" value="tRNA-dHydroUridine_Synthase_C"/>
</dbReference>
<dbReference type="InterPro" id="IPR018517">
    <property type="entry name" value="tRNA_hU_synthase_CS"/>
</dbReference>
<dbReference type="NCBIfam" id="TIGR00737">
    <property type="entry name" value="nifR3_yhdG"/>
    <property type="match status" value="1"/>
</dbReference>
<dbReference type="PANTHER" id="PTHR45846">
    <property type="entry name" value="TRNA-DIHYDROURIDINE(47) SYNTHASE [NAD(P)(+)]-LIKE"/>
    <property type="match status" value="1"/>
</dbReference>
<dbReference type="PANTHER" id="PTHR45846:SF1">
    <property type="entry name" value="TRNA-DIHYDROURIDINE(47) SYNTHASE [NAD(P)(+)]-LIKE"/>
    <property type="match status" value="1"/>
</dbReference>
<dbReference type="Pfam" id="PF01207">
    <property type="entry name" value="Dus"/>
    <property type="match status" value="1"/>
</dbReference>
<dbReference type="PIRSF" id="PIRSF006621">
    <property type="entry name" value="Dus"/>
    <property type="match status" value="1"/>
</dbReference>
<dbReference type="SUPFAM" id="SSF51395">
    <property type="entry name" value="FMN-linked oxidoreductases"/>
    <property type="match status" value="1"/>
</dbReference>
<dbReference type="PROSITE" id="PS01136">
    <property type="entry name" value="UPF0034"/>
    <property type="match status" value="1"/>
</dbReference>
<organism>
    <name type="scientific">Vibrio cholerae serotype O1 (strain ATCC 39315 / El Tor Inaba N16961)</name>
    <dbReference type="NCBI Taxonomy" id="243277"/>
    <lineage>
        <taxon>Bacteria</taxon>
        <taxon>Pseudomonadati</taxon>
        <taxon>Pseudomonadota</taxon>
        <taxon>Gammaproteobacteria</taxon>
        <taxon>Vibrionales</taxon>
        <taxon>Vibrionaceae</taxon>
        <taxon>Vibrio</taxon>
    </lineage>
</organism>
<reference key="1">
    <citation type="journal article" date="2000" name="Nature">
        <title>DNA sequence of both chromosomes of the cholera pathogen Vibrio cholerae.</title>
        <authorList>
            <person name="Heidelberg J.F."/>
            <person name="Eisen J.A."/>
            <person name="Nelson W.C."/>
            <person name="Clayton R.A."/>
            <person name="Gwinn M.L."/>
            <person name="Dodson R.J."/>
            <person name="Haft D.H."/>
            <person name="Hickey E.K."/>
            <person name="Peterson J.D."/>
            <person name="Umayam L.A."/>
            <person name="Gill S.R."/>
            <person name="Nelson K.E."/>
            <person name="Read T.D."/>
            <person name="Tettelin H."/>
            <person name="Richardson D.L."/>
            <person name="Ermolaeva M.D."/>
            <person name="Vamathevan J.J."/>
            <person name="Bass S."/>
            <person name="Qin H."/>
            <person name="Dragoi I."/>
            <person name="Sellers P."/>
            <person name="McDonald L.A."/>
            <person name="Utterback T.R."/>
            <person name="Fleischmann R.D."/>
            <person name="Nierman W.C."/>
            <person name="White O."/>
            <person name="Salzberg S.L."/>
            <person name="Smith H.O."/>
            <person name="Colwell R.R."/>
            <person name="Mekalanos J.J."/>
            <person name="Venter J.C."/>
            <person name="Fraser C.M."/>
        </authorList>
    </citation>
    <scope>NUCLEOTIDE SEQUENCE [LARGE SCALE GENOMIC DNA]</scope>
    <source>
        <strain>ATCC 39315 / El Tor Inaba N16961</strain>
    </source>
</reference>
<comment type="function">
    <text evidence="1">Catalyzes the synthesis of 5,6-dihydrouridine (D), a modified base found in the D-loop of most tRNAs, via the reduction of the C5-C6 double bond in target uridines.</text>
</comment>
<comment type="catalytic activity">
    <reaction evidence="1">
        <text>a 5,6-dihydrouridine in tRNA + NAD(+) = a uridine in tRNA + NADH + H(+)</text>
        <dbReference type="Rhea" id="RHEA:54452"/>
        <dbReference type="Rhea" id="RHEA-COMP:13339"/>
        <dbReference type="Rhea" id="RHEA-COMP:13887"/>
        <dbReference type="ChEBI" id="CHEBI:15378"/>
        <dbReference type="ChEBI" id="CHEBI:57540"/>
        <dbReference type="ChEBI" id="CHEBI:57945"/>
        <dbReference type="ChEBI" id="CHEBI:65315"/>
        <dbReference type="ChEBI" id="CHEBI:74443"/>
    </reaction>
</comment>
<comment type="catalytic activity">
    <reaction evidence="1">
        <text>a 5,6-dihydrouridine in tRNA + NADP(+) = a uridine in tRNA + NADPH + H(+)</text>
        <dbReference type="Rhea" id="RHEA:23624"/>
        <dbReference type="Rhea" id="RHEA-COMP:13339"/>
        <dbReference type="Rhea" id="RHEA-COMP:13887"/>
        <dbReference type="ChEBI" id="CHEBI:15378"/>
        <dbReference type="ChEBI" id="CHEBI:57783"/>
        <dbReference type="ChEBI" id="CHEBI:58349"/>
        <dbReference type="ChEBI" id="CHEBI:65315"/>
        <dbReference type="ChEBI" id="CHEBI:74443"/>
    </reaction>
</comment>
<comment type="cofactor">
    <cofactor evidence="1">
        <name>FMN</name>
        <dbReference type="ChEBI" id="CHEBI:58210"/>
    </cofactor>
</comment>
<comment type="similarity">
    <text evidence="1">Belongs to the Dus family. DusB subfamily.</text>
</comment>
<comment type="sequence caution" evidence="2">
    <conflict type="erroneous initiation">
        <sequence resource="EMBL-CDS" id="AAF93465"/>
    </conflict>
</comment>
<proteinExistence type="inferred from homology"/>
<accession>Q9KV66</accession>
<keyword id="KW-0285">Flavoprotein</keyword>
<keyword id="KW-0288">FMN</keyword>
<keyword id="KW-0521">NADP</keyword>
<keyword id="KW-0560">Oxidoreductase</keyword>
<keyword id="KW-1185">Reference proteome</keyword>
<keyword id="KW-0694">RNA-binding</keyword>
<keyword id="KW-0819">tRNA processing</keyword>
<keyword id="KW-0820">tRNA-binding</keyword>
<feature type="chain" id="PRO_0000162101" description="tRNA-dihydrouridine synthase B">
    <location>
        <begin position="1"/>
        <end position="322"/>
    </location>
</feature>
<feature type="active site" description="Proton donor" evidence="1">
    <location>
        <position position="100"/>
    </location>
</feature>
<feature type="binding site" evidence="1">
    <location>
        <begin position="16"/>
        <end position="18"/>
    </location>
    <ligand>
        <name>FMN</name>
        <dbReference type="ChEBI" id="CHEBI:58210"/>
    </ligand>
</feature>
<feature type="binding site" evidence="1">
    <location>
        <position position="70"/>
    </location>
    <ligand>
        <name>FMN</name>
        <dbReference type="ChEBI" id="CHEBI:58210"/>
    </ligand>
</feature>
<feature type="binding site" evidence="1">
    <location>
        <position position="139"/>
    </location>
    <ligand>
        <name>FMN</name>
        <dbReference type="ChEBI" id="CHEBI:58210"/>
    </ligand>
</feature>
<feature type="binding site" evidence="1">
    <location>
        <begin position="200"/>
        <end position="202"/>
    </location>
    <ligand>
        <name>FMN</name>
        <dbReference type="ChEBI" id="CHEBI:58210"/>
    </ligand>
</feature>
<feature type="binding site" evidence="1">
    <location>
        <begin position="224"/>
        <end position="225"/>
    </location>
    <ligand>
        <name>FMN</name>
        <dbReference type="ChEBI" id="CHEBI:58210"/>
    </ligand>
</feature>
<gene>
    <name evidence="1" type="primary">dusB</name>
    <name type="ordered locus">VC_0291</name>
</gene>
<protein>
    <recommendedName>
        <fullName evidence="1">tRNA-dihydrouridine synthase B</fullName>
        <ecNumber evidence="1">1.3.1.-</ecNumber>
    </recommendedName>
</protein>